<feature type="chain" id="PRO_0000062701" description="Probable peptidoglycan glycosyltransferase FtsW">
    <location>
        <begin position="1"/>
        <end position="414"/>
    </location>
</feature>
<feature type="topological domain" description="Cytoplasmic" evidence="1">
    <location>
        <begin position="1"/>
        <end position="12"/>
    </location>
</feature>
<feature type="transmembrane region" description="Helical" evidence="2">
    <location>
        <begin position="13"/>
        <end position="33"/>
    </location>
</feature>
<feature type="topological domain" description="Periplasmic" evidence="1">
    <location>
        <begin position="34"/>
        <end position="47"/>
    </location>
</feature>
<feature type="transmembrane region" description="Helical" evidence="2">
    <location>
        <begin position="48"/>
        <end position="68"/>
    </location>
</feature>
<feature type="topological domain" description="Cytoplasmic" evidence="1">
    <location>
        <begin position="69"/>
        <end position="86"/>
    </location>
</feature>
<feature type="transmembrane region" description="Helical" evidence="2">
    <location>
        <begin position="87"/>
        <end position="107"/>
    </location>
</feature>
<feature type="topological domain" description="Periplasmic" evidence="1">
    <location>
        <begin position="108"/>
        <end position="111"/>
    </location>
</feature>
<feature type="transmembrane region" description="Helical" evidence="2">
    <location>
        <begin position="112"/>
        <end position="132"/>
    </location>
</feature>
<feature type="topological domain" description="Cytoplasmic" evidence="1">
    <location>
        <begin position="133"/>
        <end position="174"/>
    </location>
</feature>
<feature type="transmembrane region" description="Helical" evidence="2">
    <location>
        <begin position="175"/>
        <end position="194"/>
    </location>
</feature>
<feature type="topological domain" description="Periplasmic" evidence="1">
    <location>
        <begin position="195"/>
        <end position="197"/>
    </location>
</feature>
<feature type="transmembrane region" description="Helical" evidence="2">
    <location>
        <begin position="198"/>
        <end position="217"/>
    </location>
</feature>
<feature type="topological domain" description="Cytoplasmic" evidence="1">
    <location>
        <position position="218"/>
    </location>
</feature>
<feature type="transmembrane region" description="Helical" evidence="2">
    <location>
        <begin position="219"/>
        <end position="239"/>
    </location>
</feature>
<feature type="topological domain" description="Periplasmic" evidence="1">
    <location>
        <begin position="240"/>
        <end position="301"/>
    </location>
</feature>
<feature type="transmembrane region" description="Helical" evidence="2">
    <location>
        <begin position="302"/>
        <end position="322"/>
    </location>
</feature>
<feature type="topological domain" description="Cytoplasmic" evidence="1">
    <location>
        <begin position="323"/>
        <end position="342"/>
    </location>
</feature>
<feature type="transmembrane region" description="Helical" evidence="2">
    <location>
        <begin position="343"/>
        <end position="363"/>
    </location>
</feature>
<feature type="topological domain" description="Periplasmic" evidence="1">
    <location>
        <begin position="364"/>
        <end position="373"/>
    </location>
</feature>
<feature type="transmembrane region" description="Helical" evidence="2">
    <location>
        <begin position="374"/>
        <end position="394"/>
    </location>
</feature>
<feature type="topological domain" description="Cytoplasmic" evidence="1">
    <location>
        <begin position="395"/>
        <end position="414"/>
    </location>
</feature>
<accession>P0ABG6</accession>
<accession>P16457</accession>
<name>FTSW_ECO57</name>
<gene>
    <name evidence="2" type="primary">ftsW</name>
    <name type="ordered locus">Z0099</name>
    <name type="ordered locus">ECs0093</name>
</gene>
<dbReference type="EC" id="2.4.99.28" evidence="2"/>
<dbReference type="EMBL" id="AE005174">
    <property type="protein sequence ID" value="AAG54393.1"/>
    <property type="molecule type" value="Genomic_DNA"/>
</dbReference>
<dbReference type="EMBL" id="BA000007">
    <property type="protein sequence ID" value="BAB33516.1"/>
    <property type="molecule type" value="Genomic_DNA"/>
</dbReference>
<dbReference type="PIR" id="E85491">
    <property type="entry name" value="E85491"/>
</dbReference>
<dbReference type="PIR" id="E90640">
    <property type="entry name" value="E90640"/>
</dbReference>
<dbReference type="RefSeq" id="NP_308120.1">
    <property type="nucleotide sequence ID" value="NC_002695.1"/>
</dbReference>
<dbReference type="RefSeq" id="WP_001295532.1">
    <property type="nucleotide sequence ID" value="NZ_VOAI01000002.1"/>
</dbReference>
<dbReference type="SMR" id="P0ABG6"/>
<dbReference type="STRING" id="155864.Z0099"/>
<dbReference type="GeneID" id="913549"/>
<dbReference type="GeneID" id="93777345"/>
<dbReference type="KEGG" id="ece:Z0099"/>
<dbReference type="KEGG" id="ecs:ECs_0093"/>
<dbReference type="PATRIC" id="fig|386585.9.peg.193"/>
<dbReference type="eggNOG" id="COG0772">
    <property type="taxonomic scope" value="Bacteria"/>
</dbReference>
<dbReference type="HOGENOM" id="CLU_029243_1_1_6"/>
<dbReference type="OMA" id="MEPDFGA"/>
<dbReference type="UniPathway" id="UPA00219"/>
<dbReference type="Proteomes" id="UP000000558">
    <property type="component" value="Chromosome"/>
</dbReference>
<dbReference type="Proteomes" id="UP000002519">
    <property type="component" value="Chromosome"/>
</dbReference>
<dbReference type="GO" id="GO:0032153">
    <property type="term" value="C:cell division site"/>
    <property type="evidence" value="ECO:0007669"/>
    <property type="project" value="UniProtKB-UniRule"/>
</dbReference>
<dbReference type="GO" id="GO:0005886">
    <property type="term" value="C:plasma membrane"/>
    <property type="evidence" value="ECO:0007669"/>
    <property type="project" value="UniProtKB-SubCell"/>
</dbReference>
<dbReference type="GO" id="GO:0015648">
    <property type="term" value="F:lipid-linked peptidoglycan transporter activity"/>
    <property type="evidence" value="ECO:0007669"/>
    <property type="project" value="TreeGrafter"/>
</dbReference>
<dbReference type="GO" id="GO:0008955">
    <property type="term" value="F:peptidoglycan glycosyltransferase activity"/>
    <property type="evidence" value="ECO:0007669"/>
    <property type="project" value="UniProtKB-UniRule"/>
</dbReference>
<dbReference type="GO" id="GO:0071555">
    <property type="term" value="P:cell wall organization"/>
    <property type="evidence" value="ECO:0007669"/>
    <property type="project" value="UniProtKB-KW"/>
</dbReference>
<dbReference type="GO" id="GO:0043093">
    <property type="term" value="P:FtsZ-dependent cytokinesis"/>
    <property type="evidence" value="ECO:0007669"/>
    <property type="project" value="UniProtKB-UniRule"/>
</dbReference>
<dbReference type="GO" id="GO:0009252">
    <property type="term" value="P:peptidoglycan biosynthetic process"/>
    <property type="evidence" value="ECO:0007669"/>
    <property type="project" value="UniProtKB-UniRule"/>
</dbReference>
<dbReference type="GO" id="GO:0008360">
    <property type="term" value="P:regulation of cell shape"/>
    <property type="evidence" value="ECO:0007669"/>
    <property type="project" value="UniProtKB-KW"/>
</dbReference>
<dbReference type="HAMAP" id="MF_00913">
    <property type="entry name" value="PGT_FtsW_proteobact"/>
    <property type="match status" value="1"/>
</dbReference>
<dbReference type="InterPro" id="IPR018365">
    <property type="entry name" value="Cell_cycle_FtsW-rel_CS"/>
</dbReference>
<dbReference type="InterPro" id="IPR013437">
    <property type="entry name" value="FtsW"/>
</dbReference>
<dbReference type="InterPro" id="IPR001182">
    <property type="entry name" value="FtsW/RodA"/>
</dbReference>
<dbReference type="NCBIfam" id="TIGR02614">
    <property type="entry name" value="ftsW"/>
    <property type="match status" value="1"/>
</dbReference>
<dbReference type="NCBIfam" id="NF008042">
    <property type="entry name" value="PRK10774.1"/>
    <property type="match status" value="1"/>
</dbReference>
<dbReference type="PANTHER" id="PTHR30474">
    <property type="entry name" value="CELL CYCLE PROTEIN"/>
    <property type="match status" value="1"/>
</dbReference>
<dbReference type="PANTHER" id="PTHR30474:SF2">
    <property type="entry name" value="PEPTIDOGLYCAN GLYCOSYLTRANSFERASE FTSW-RELATED"/>
    <property type="match status" value="1"/>
</dbReference>
<dbReference type="Pfam" id="PF01098">
    <property type="entry name" value="FTSW_RODA_SPOVE"/>
    <property type="match status" value="1"/>
</dbReference>
<dbReference type="PROSITE" id="PS00428">
    <property type="entry name" value="FTSW_RODA_SPOVE"/>
    <property type="match status" value="1"/>
</dbReference>
<reference key="1">
    <citation type="journal article" date="2001" name="Nature">
        <title>Genome sequence of enterohaemorrhagic Escherichia coli O157:H7.</title>
        <authorList>
            <person name="Perna N.T."/>
            <person name="Plunkett G. III"/>
            <person name="Burland V."/>
            <person name="Mau B."/>
            <person name="Glasner J.D."/>
            <person name="Rose D.J."/>
            <person name="Mayhew G.F."/>
            <person name="Evans P.S."/>
            <person name="Gregor J."/>
            <person name="Kirkpatrick H.A."/>
            <person name="Posfai G."/>
            <person name="Hackett J."/>
            <person name="Klink S."/>
            <person name="Boutin A."/>
            <person name="Shao Y."/>
            <person name="Miller L."/>
            <person name="Grotbeck E.J."/>
            <person name="Davis N.W."/>
            <person name="Lim A."/>
            <person name="Dimalanta E.T."/>
            <person name="Potamousis K."/>
            <person name="Apodaca J."/>
            <person name="Anantharaman T.S."/>
            <person name="Lin J."/>
            <person name="Yen G."/>
            <person name="Schwartz D.C."/>
            <person name="Welch R.A."/>
            <person name="Blattner F.R."/>
        </authorList>
    </citation>
    <scope>NUCLEOTIDE SEQUENCE [LARGE SCALE GENOMIC DNA]</scope>
    <source>
        <strain>O157:H7 / EDL933 / ATCC 700927 / EHEC</strain>
    </source>
</reference>
<reference key="2">
    <citation type="journal article" date="2001" name="DNA Res.">
        <title>Complete genome sequence of enterohemorrhagic Escherichia coli O157:H7 and genomic comparison with a laboratory strain K-12.</title>
        <authorList>
            <person name="Hayashi T."/>
            <person name="Makino K."/>
            <person name="Ohnishi M."/>
            <person name="Kurokawa K."/>
            <person name="Ishii K."/>
            <person name="Yokoyama K."/>
            <person name="Han C.-G."/>
            <person name="Ohtsubo E."/>
            <person name="Nakayama K."/>
            <person name="Murata T."/>
            <person name="Tanaka M."/>
            <person name="Tobe T."/>
            <person name="Iida T."/>
            <person name="Takami H."/>
            <person name="Honda T."/>
            <person name="Sasakawa C."/>
            <person name="Ogasawara N."/>
            <person name="Yasunaga T."/>
            <person name="Kuhara S."/>
            <person name="Shiba T."/>
            <person name="Hattori M."/>
            <person name="Shinagawa H."/>
        </authorList>
    </citation>
    <scope>NUCLEOTIDE SEQUENCE [LARGE SCALE GENOMIC DNA]</scope>
    <source>
        <strain>O157:H7 / Sakai / RIMD 0509952 / EHEC</strain>
    </source>
</reference>
<keyword id="KW-0131">Cell cycle</keyword>
<keyword id="KW-0132">Cell division</keyword>
<keyword id="KW-0997">Cell inner membrane</keyword>
<keyword id="KW-1003">Cell membrane</keyword>
<keyword id="KW-0133">Cell shape</keyword>
<keyword id="KW-0961">Cell wall biogenesis/degradation</keyword>
<keyword id="KW-0328">Glycosyltransferase</keyword>
<keyword id="KW-0472">Membrane</keyword>
<keyword id="KW-0573">Peptidoglycan synthesis</keyword>
<keyword id="KW-1185">Reference proteome</keyword>
<keyword id="KW-0808">Transferase</keyword>
<keyword id="KW-0812">Transmembrane</keyword>
<keyword id="KW-1133">Transmembrane helix</keyword>
<proteinExistence type="inferred from homology"/>
<evidence type="ECO:0000255" key="1"/>
<evidence type="ECO:0000255" key="2">
    <source>
        <dbReference type="HAMAP-Rule" id="MF_00913"/>
    </source>
</evidence>
<comment type="function">
    <text evidence="2">Peptidoglycan polymerase that is essential for cell division.</text>
</comment>
<comment type="catalytic activity">
    <reaction evidence="2">
        <text>[GlcNAc-(1-&gt;4)-Mur2Ac(oyl-L-Ala-gamma-D-Glu-L-Lys-D-Ala-D-Ala)](n)-di-trans,octa-cis-undecaprenyl diphosphate + beta-D-GlcNAc-(1-&gt;4)-Mur2Ac(oyl-L-Ala-gamma-D-Glu-L-Lys-D-Ala-D-Ala)-di-trans,octa-cis-undecaprenyl diphosphate = [GlcNAc-(1-&gt;4)-Mur2Ac(oyl-L-Ala-gamma-D-Glu-L-Lys-D-Ala-D-Ala)](n+1)-di-trans,octa-cis-undecaprenyl diphosphate + di-trans,octa-cis-undecaprenyl diphosphate + H(+)</text>
        <dbReference type="Rhea" id="RHEA:23708"/>
        <dbReference type="Rhea" id="RHEA-COMP:9602"/>
        <dbReference type="Rhea" id="RHEA-COMP:9603"/>
        <dbReference type="ChEBI" id="CHEBI:15378"/>
        <dbReference type="ChEBI" id="CHEBI:58405"/>
        <dbReference type="ChEBI" id="CHEBI:60033"/>
        <dbReference type="ChEBI" id="CHEBI:78435"/>
        <dbReference type="EC" id="2.4.99.28"/>
    </reaction>
</comment>
<comment type="pathway">
    <text evidence="2">Cell wall biogenesis; peptidoglycan biosynthesis.</text>
</comment>
<comment type="subcellular location">
    <subcellularLocation>
        <location evidence="2">Cell inner membrane</location>
        <topology evidence="2">Multi-pass membrane protein</topology>
    </subcellularLocation>
    <text evidence="2">Localizes to the division septum.</text>
</comment>
<comment type="similarity">
    <text evidence="2">Belongs to the SEDS family. FtsW subfamily.</text>
</comment>
<organism>
    <name type="scientific">Escherichia coli O157:H7</name>
    <dbReference type="NCBI Taxonomy" id="83334"/>
    <lineage>
        <taxon>Bacteria</taxon>
        <taxon>Pseudomonadati</taxon>
        <taxon>Pseudomonadota</taxon>
        <taxon>Gammaproteobacteria</taxon>
        <taxon>Enterobacterales</taxon>
        <taxon>Enterobacteriaceae</taxon>
        <taxon>Escherichia</taxon>
    </lineage>
</organism>
<protein>
    <recommendedName>
        <fullName evidence="2">Probable peptidoglycan glycosyltransferase FtsW</fullName>
        <shortName evidence="2">PGT</shortName>
        <ecNumber evidence="2">2.4.99.28</ecNumber>
    </recommendedName>
    <alternativeName>
        <fullName evidence="2">Cell division protein FtsW</fullName>
    </alternativeName>
    <alternativeName>
        <fullName evidence="2">Cell wall polymerase</fullName>
    </alternativeName>
    <alternativeName>
        <fullName evidence="2">Peptidoglycan polymerase</fullName>
        <shortName evidence="2">PG polymerase</shortName>
    </alternativeName>
</protein>
<sequence length="414" mass="45987">MRLSLPRLKMPRLPGFSILVWISTALKGWVMGSREKDTDSLIMYDRTLLWLTFGLAAIGFIMVTSASMPIGQRLTNDPFFFAKRDGVYLILAFILAIITLRLPMEFWQRYSATMLLGSIILLMIVLVVGSSVKGASRWIDLGLLRIQPAELTKLSLFCYIANYLVRKGDEVRNNLRGFLKPMGVILVLAVLLLAQPDLGTVVVLFVTTLAMLFLAGAKLWQFIAIIGMGISAVVLLILAEPYRIRRVTAFWNPWEDPFGSGYQLTQSLMAFGRGELWGQGLGNSVQKLEYLPEAHTDFIFAIIGEELGYVGVVLALLMVFFVAFRAMSIGRKALEIDHRFSGFLACSIGIWFSFQALVNVGAAAGMLPTKGLTLPLISYGGSSLLIMSTAIMMLLRIDYETRLEKAQAFVRGSR</sequence>